<keyword id="KW-0028">Amino-acid biosynthesis</keyword>
<keyword id="KW-0057">Aromatic amino acid biosynthesis</keyword>
<keyword id="KW-0067">ATP-binding</keyword>
<keyword id="KW-0963">Cytoplasm</keyword>
<keyword id="KW-0418">Kinase</keyword>
<keyword id="KW-0547">Nucleotide-binding</keyword>
<keyword id="KW-0808">Transferase</keyword>
<comment type="catalytic activity">
    <reaction evidence="1">
        <text>shikimate + ATP = 3-phosphoshikimate + ADP + H(+)</text>
        <dbReference type="Rhea" id="RHEA:13121"/>
        <dbReference type="ChEBI" id="CHEBI:15378"/>
        <dbReference type="ChEBI" id="CHEBI:30616"/>
        <dbReference type="ChEBI" id="CHEBI:36208"/>
        <dbReference type="ChEBI" id="CHEBI:145989"/>
        <dbReference type="ChEBI" id="CHEBI:456216"/>
        <dbReference type="EC" id="2.7.1.71"/>
    </reaction>
</comment>
<comment type="pathway">
    <text evidence="1">Metabolic intermediate biosynthesis; chorismate biosynthesis; chorismate from D-erythrose 4-phosphate and phosphoenolpyruvate: step 5/7.</text>
</comment>
<comment type="subcellular location">
    <subcellularLocation>
        <location evidence="1">Cytoplasm</location>
    </subcellularLocation>
</comment>
<comment type="similarity">
    <text evidence="1">Belongs to the GHMP kinase family. Archaeal shikimate kinase subfamily.</text>
</comment>
<evidence type="ECO:0000255" key="1">
    <source>
        <dbReference type="HAMAP-Rule" id="MF_00370"/>
    </source>
</evidence>
<organism>
    <name type="scientific">Methanococcoides burtonii (strain DSM 6242 / NBRC 107633 / OCM 468 / ACE-M)</name>
    <dbReference type="NCBI Taxonomy" id="259564"/>
    <lineage>
        <taxon>Archaea</taxon>
        <taxon>Methanobacteriati</taxon>
        <taxon>Methanobacteriota</taxon>
        <taxon>Stenosarchaea group</taxon>
        <taxon>Methanomicrobia</taxon>
        <taxon>Methanosarcinales</taxon>
        <taxon>Methanosarcinaceae</taxon>
        <taxon>Methanococcoides</taxon>
    </lineage>
</organism>
<gene>
    <name evidence="1" type="primary">aroK</name>
    <name type="ordered locus">Mbur_0875</name>
</gene>
<accession>Q12XK2</accession>
<name>AROK_METBU</name>
<sequence length="287" mass="30259">MTFTGQAYALGAGTVINAIATWKGAAFGVDLKTFADVELTKESSSFIGTIEGVPHGDTTLIERSMDLVLEHFGIEMGGTVVTRSEVPLASGLKSSSAAANATILATLDALGETLEPLDAVKMGVRAAKDAGVTITGAFDDACASFFGGIVVTDNRTNELVKRTEKEMDVVIFAPDRQSFSSQTNVHNSELLAPWVDMAYDLALDGEYEKAMTLNGFLYCGALGFSTDVMMEALKCGVKGVSLSGTGPAYSALVDRKMADTLTKVWENLGTSGKVINTKINNDGLTKL</sequence>
<reference key="1">
    <citation type="journal article" date="2009" name="ISME J.">
        <title>The genome sequence of the psychrophilic archaeon, Methanococcoides burtonii: the role of genome evolution in cold adaptation.</title>
        <authorList>
            <person name="Allen M.A."/>
            <person name="Lauro F.M."/>
            <person name="Williams T.J."/>
            <person name="Burg D."/>
            <person name="Siddiqui K.S."/>
            <person name="De Francisci D."/>
            <person name="Chong K.W."/>
            <person name="Pilak O."/>
            <person name="Chew H.H."/>
            <person name="De Maere M.Z."/>
            <person name="Ting L."/>
            <person name="Katrib M."/>
            <person name="Ng C."/>
            <person name="Sowers K.R."/>
            <person name="Galperin M.Y."/>
            <person name="Anderson I.J."/>
            <person name="Ivanova N."/>
            <person name="Dalin E."/>
            <person name="Martinez M."/>
            <person name="Lapidus A."/>
            <person name="Hauser L."/>
            <person name="Land M."/>
            <person name="Thomas T."/>
            <person name="Cavicchioli R."/>
        </authorList>
    </citation>
    <scope>NUCLEOTIDE SEQUENCE [LARGE SCALE GENOMIC DNA]</scope>
    <source>
        <strain>DSM 6242 / NBRC 107633 / OCM 468 / ACE-M</strain>
    </source>
</reference>
<dbReference type="EC" id="2.7.1.71" evidence="1"/>
<dbReference type="EMBL" id="CP000300">
    <property type="protein sequence ID" value="ABE51824.1"/>
    <property type="molecule type" value="Genomic_DNA"/>
</dbReference>
<dbReference type="RefSeq" id="WP_011498977.1">
    <property type="nucleotide sequence ID" value="NC_007955.1"/>
</dbReference>
<dbReference type="SMR" id="Q12XK2"/>
<dbReference type="STRING" id="259564.Mbur_0875"/>
<dbReference type="GeneID" id="3996873"/>
<dbReference type="KEGG" id="mbu:Mbur_0875"/>
<dbReference type="HOGENOM" id="CLU_073768_0_0_2"/>
<dbReference type="OrthoDB" id="9602at2157"/>
<dbReference type="UniPathway" id="UPA00053">
    <property type="reaction ID" value="UER00088"/>
</dbReference>
<dbReference type="Proteomes" id="UP000001979">
    <property type="component" value="Chromosome"/>
</dbReference>
<dbReference type="GO" id="GO:0005737">
    <property type="term" value="C:cytoplasm"/>
    <property type="evidence" value="ECO:0007669"/>
    <property type="project" value="UniProtKB-SubCell"/>
</dbReference>
<dbReference type="GO" id="GO:0005524">
    <property type="term" value="F:ATP binding"/>
    <property type="evidence" value="ECO:0007669"/>
    <property type="project" value="UniProtKB-UniRule"/>
</dbReference>
<dbReference type="GO" id="GO:0004765">
    <property type="term" value="F:shikimate kinase activity"/>
    <property type="evidence" value="ECO:0007669"/>
    <property type="project" value="UniProtKB-UniRule"/>
</dbReference>
<dbReference type="GO" id="GO:0008652">
    <property type="term" value="P:amino acid biosynthetic process"/>
    <property type="evidence" value="ECO:0007669"/>
    <property type="project" value="UniProtKB-KW"/>
</dbReference>
<dbReference type="GO" id="GO:0009073">
    <property type="term" value="P:aromatic amino acid family biosynthetic process"/>
    <property type="evidence" value="ECO:0007669"/>
    <property type="project" value="UniProtKB-KW"/>
</dbReference>
<dbReference type="GO" id="GO:0009423">
    <property type="term" value="P:chorismate biosynthetic process"/>
    <property type="evidence" value="ECO:0007669"/>
    <property type="project" value="UniProtKB-UniRule"/>
</dbReference>
<dbReference type="Gene3D" id="3.30.230.10">
    <property type="match status" value="1"/>
</dbReference>
<dbReference type="HAMAP" id="MF_00370">
    <property type="entry name" value="Shik_kinase_arch"/>
    <property type="match status" value="1"/>
</dbReference>
<dbReference type="InterPro" id="IPR036554">
    <property type="entry name" value="GHMP_kinase_C_sf"/>
</dbReference>
<dbReference type="InterPro" id="IPR006204">
    <property type="entry name" value="GHMP_kinase_N_dom"/>
</dbReference>
<dbReference type="InterPro" id="IPR020568">
    <property type="entry name" value="Ribosomal_Su5_D2-typ_SF"/>
</dbReference>
<dbReference type="InterPro" id="IPR014721">
    <property type="entry name" value="Ribsml_uS5_D2-typ_fold_subgr"/>
</dbReference>
<dbReference type="InterPro" id="IPR010189">
    <property type="entry name" value="SK_arc"/>
</dbReference>
<dbReference type="NCBIfam" id="TIGR01920">
    <property type="entry name" value="Shik_kin_archae"/>
    <property type="match status" value="1"/>
</dbReference>
<dbReference type="PANTHER" id="PTHR20861">
    <property type="entry name" value="HOMOSERINE/4-DIPHOSPHOCYTIDYL-2-C-METHYL-D-ERYTHRITOL KINASE"/>
    <property type="match status" value="1"/>
</dbReference>
<dbReference type="PANTHER" id="PTHR20861:SF3">
    <property type="entry name" value="SHIKIMATE KINASE"/>
    <property type="match status" value="1"/>
</dbReference>
<dbReference type="Pfam" id="PF00288">
    <property type="entry name" value="GHMP_kinases_N"/>
    <property type="match status" value="1"/>
</dbReference>
<dbReference type="PIRSF" id="PIRSF005758">
    <property type="entry name" value="Shikimt_kin_arch"/>
    <property type="match status" value="1"/>
</dbReference>
<dbReference type="SUPFAM" id="SSF55060">
    <property type="entry name" value="GHMP Kinase, C-terminal domain"/>
    <property type="match status" value="1"/>
</dbReference>
<dbReference type="SUPFAM" id="SSF54211">
    <property type="entry name" value="Ribosomal protein S5 domain 2-like"/>
    <property type="match status" value="1"/>
</dbReference>
<feature type="chain" id="PRO_1000059933" description="Shikimate kinase">
    <location>
        <begin position="1"/>
        <end position="287"/>
    </location>
</feature>
<feature type="binding site" evidence="1">
    <location>
        <begin position="87"/>
        <end position="97"/>
    </location>
    <ligand>
        <name>ATP</name>
        <dbReference type="ChEBI" id="CHEBI:30616"/>
    </ligand>
</feature>
<protein>
    <recommendedName>
        <fullName evidence="1">Shikimate kinase</fullName>
        <shortName evidence="1">SK</shortName>
        <ecNumber evidence="1">2.7.1.71</ecNumber>
    </recommendedName>
</protein>
<proteinExistence type="inferred from homology"/>